<sequence length="328" mass="36227">MADNTGSEMKSGSFMLEKSAKIFVAGHRGLVGSAIVRKLQDQGFTNLVLRTHSELDLTSQSDVESFFATEKPVYVILAAAKVGGIHANNTYPADFIGVNLQIQTNVIHSAYTHGVKKLLFLGSSCIYPKFAPQPIPESALLTGPLEPTNEWYAIAKIAGIKMCQAYRLQHQWDAISGMPTNLYGQNDNFHPENSHVLPALMRRFHEAKANNADEVVVWGSGSPLREFLHVDDLADACVFLMDQYSGFEHVNVGSGVEVTIKELAELVKEVVGFKGKLVWDTTKPDGTPRKLMDSSKLASLGWTPKISLKDGLSQTYEWYLENVVQKKQ</sequence>
<dbReference type="EC" id="1.1.1.271" evidence="2"/>
<dbReference type="EMBL" id="AC034106">
    <property type="protein sequence ID" value="AAF97269.1"/>
    <property type="molecule type" value="Genomic_DNA"/>
</dbReference>
<dbReference type="EMBL" id="CP002684">
    <property type="protein sequence ID" value="AEE29650.1"/>
    <property type="molecule type" value="Genomic_DNA"/>
</dbReference>
<dbReference type="EMBL" id="AY063880">
    <property type="protein sequence ID" value="AAL36236.1"/>
    <property type="molecule type" value="mRNA"/>
</dbReference>
<dbReference type="EMBL" id="AY096364">
    <property type="protein sequence ID" value="AAM20005.1"/>
    <property type="molecule type" value="mRNA"/>
</dbReference>
<dbReference type="PIR" id="B86314">
    <property type="entry name" value="B86314"/>
</dbReference>
<dbReference type="RefSeq" id="NP_564040.1">
    <molecule id="Q9LMU0-1"/>
    <property type="nucleotide sequence ID" value="NM_101652.3"/>
</dbReference>
<dbReference type="SMR" id="Q9LMU0"/>
<dbReference type="BioGRID" id="23607">
    <property type="interactions" value="2"/>
</dbReference>
<dbReference type="FunCoup" id="Q9LMU0">
    <property type="interactions" value="3170"/>
</dbReference>
<dbReference type="IntAct" id="Q9LMU0">
    <property type="interactions" value="1"/>
</dbReference>
<dbReference type="STRING" id="3702.Q9LMU0"/>
<dbReference type="iPTMnet" id="Q9LMU0"/>
<dbReference type="PaxDb" id="3702-AT1G17890.1"/>
<dbReference type="ProteomicsDB" id="222519">
    <molecule id="Q9LMU0-1"/>
</dbReference>
<dbReference type="EnsemblPlants" id="AT1G17890.1">
    <molecule id="Q9LMU0-1"/>
    <property type="protein sequence ID" value="AT1G17890.1"/>
    <property type="gene ID" value="AT1G17890"/>
</dbReference>
<dbReference type="GeneID" id="838368"/>
<dbReference type="Gramene" id="AT1G17890.1">
    <molecule id="Q9LMU0-1"/>
    <property type="protein sequence ID" value="AT1G17890.1"/>
    <property type="gene ID" value="AT1G17890"/>
</dbReference>
<dbReference type="KEGG" id="ath:AT1G17890"/>
<dbReference type="Araport" id="AT1G17890"/>
<dbReference type="TAIR" id="AT1G17890">
    <property type="gene designation" value="GER2"/>
</dbReference>
<dbReference type="eggNOG" id="KOG1431">
    <property type="taxonomic scope" value="Eukaryota"/>
</dbReference>
<dbReference type="InParanoid" id="Q9LMU0"/>
<dbReference type="PhylomeDB" id="Q9LMU0"/>
<dbReference type="BRENDA" id="1.1.1.271">
    <property type="organism ID" value="399"/>
</dbReference>
<dbReference type="UniPathway" id="UPA00128">
    <property type="reaction ID" value="UER00191"/>
</dbReference>
<dbReference type="PRO" id="PR:Q9LMU0"/>
<dbReference type="Proteomes" id="UP000006548">
    <property type="component" value="Chromosome 1"/>
</dbReference>
<dbReference type="ExpressionAtlas" id="Q9LMU0">
    <property type="expression patterns" value="baseline and differential"/>
</dbReference>
<dbReference type="GO" id="GO:0050577">
    <property type="term" value="F:GDP-L-fucose synthase activity"/>
    <property type="evidence" value="ECO:0007669"/>
    <property type="project" value="UniProtKB-EC"/>
</dbReference>
<dbReference type="GO" id="GO:0016853">
    <property type="term" value="F:isomerase activity"/>
    <property type="evidence" value="ECO:0007669"/>
    <property type="project" value="UniProtKB-KW"/>
</dbReference>
<dbReference type="GO" id="GO:0042351">
    <property type="term" value="P:'de novo' GDP-L-fucose biosynthetic process"/>
    <property type="evidence" value="ECO:0007669"/>
    <property type="project" value="UniProtKB-UniPathway"/>
</dbReference>
<dbReference type="CDD" id="cd05239">
    <property type="entry name" value="GDP_FS_SDR_e"/>
    <property type="match status" value="1"/>
</dbReference>
<dbReference type="FunFam" id="3.40.50.720:FF:000101">
    <property type="entry name" value="GDP-L-fucose synthase"/>
    <property type="match status" value="1"/>
</dbReference>
<dbReference type="Gene3D" id="3.40.50.720">
    <property type="entry name" value="NAD(P)-binding Rossmann-like Domain"/>
    <property type="match status" value="1"/>
</dbReference>
<dbReference type="Gene3D" id="3.90.25.10">
    <property type="entry name" value="UDP-galactose 4-epimerase, domain 1"/>
    <property type="match status" value="1"/>
</dbReference>
<dbReference type="HAMAP" id="MF_00956">
    <property type="entry name" value="GDP_fucose_synth"/>
    <property type="match status" value="1"/>
</dbReference>
<dbReference type="InterPro" id="IPR001509">
    <property type="entry name" value="Epimerase_deHydtase"/>
</dbReference>
<dbReference type="InterPro" id="IPR028614">
    <property type="entry name" value="GDP_fucose/colitose_synth"/>
</dbReference>
<dbReference type="InterPro" id="IPR036291">
    <property type="entry name" value="NAD(P)-bd_dom_sf"/>
</dbReference>
<dbReference type="PANTHER" id="PTHR43238">
    <property type="entry name" value="GDP-L-FUCOSE SYNTHASE"/>
    <property type="match status" value="1"/>
</dbReference>
<dbReference type="PANTHER" id="PTHR43238:SF8">
    <property type="entry name" value="GDP-L-FUCOSE SYNTHASE 2-RELATED"/>
    <property type="match status" value="1"/>
</dbReference>
<dbReference type="Pfam" id="PF01370">
    <property type="entry name" value="Epimerase"/>
    <property type="match status" value="1"/>
</dbReference>
<dbReference type="SUPFAM" id="SSF51735">
    <property type="entry name" value="NAD(P)-binding Rossmann-fold domains"/>
    <property type="match status" value="1"/>
</dbReference>
<gene>
    <name type="primary">GER2</name>
    <name type="ordered locus">At1g17890</name>
    <name type="ORF">F2H15.12</name>
</gene>
<evidence type="ECO:0000250" key="1"/>
<evidence type="ECO:0000269" key="2">
    <source>
    </source>
</evidence>
<evidence type="ECO:0000305" key="3"/>
<evidence type="ECO:0007744" key="4">
    <source>
    </source>
</evidence>
<organism>
    <name type="scientific">Arabidopsis thaliana</name>
    <name type="common">Mouse-ear cress</name>
    <dbReference type="NCBI Taxonomy" id="3702"/>
    <lineage>
        <taxon>Eukaryota</taxon>
        <taxon>Viridiplantae</taxon>
        <taxon>Streptophyta</taxon>
        <taxon>Embryophyta</taxon>
        <taxon>Tracheophyta</taxon>
        <taxon>Spermatophyta</taxon>
        <taxon>Magnoliopsida</taxon>
        <taxon>eudicotyledons</taxon>
        <taxon>Gunneridae</taxon>
        <taxon>Pentapetalae</taxon>
        <taxon>rosids</taxon>
        <taxon>malvids</taxon>
        <taxon>Brassicales</taxon>
        <taxon>Brassicaceae</taxon>
        <taxon>Camelineae</taxon>
        <taxon>Arabidopsis</taxon>
    </lineage>
</organism>
<keyword id="KW-0007">Acetylation</keyword>
<keyword id="KW-0025">Alternative splicing</keyword>
<keyword id="KW-0413">Isomerase</keyword>
<keyword id="KW-0511">Multifunctional enzyme</keyword>
<keyword id="KW-0521">NADP</keyword>
<keyword id="KW-0560">Oxidoreductase</keyword>
<keyword id="KW-1185">Reference proteome</keyword>
<name>FCL2_ARATH</name>
<feature type="initiator methionine" description="Removed" evidence="4">
    <location>
        <position position="1"/>
    </location>
</feature>
<feature type="chain" id="PRO_0000174355" description="Putative GDP-L-fucose synthase 2">
    <location>
        <begin position="2"/>
        <end position="328"/>
    </location>
</feature>
<feature type="active site" description="Proton donor/acceptor" evidence="1">
    <location>
        <position position="152"/>
    </location>
</feature>
<feature type="binding site" evidence="1">
    <location>
        <begin position="26"/>
        <end position="32"/>
    </location>
    <ligand>
        <name>NADP(+)</name>
        <dbReference type="ChEBI" id="CHEBI:58349"/>
    </ligand>
</feature>
<feature type="binding site" evidence="1">
    <location>
        <position position="156"/>
    </location>
    <ligand>
        <name>NADP(+)</name>
        <dbReference type="ChEBI" id="CHEBI:58349"/>
    </ligand>
</feature>
<feature type="binding site" evidence="1">
    <location>
        <begin position="179"/>
        <end position="182"/>
    </location>
    <ligand>
        <name>NADP(+)</name>
        <dbReference type="ChEBI" id="CHEBI:58349"/>
    </ligand>
</feature>
<feature type="binding site" evidence="1">
    <location>
        <position position="195"/>
    </location>
    <ligand>
        <name>NADP(+)</name>
        <dbReference type="ChEBI" id="CHEBI:58349"/>
    </ligand>
</feature>
<feature type="binding site" evidence="1">
    <location>
        <position position="203"/>
    </location>
    <ligand>
        <name>substrate</name>
    </ligand>
</feature>
<feature type="binding site" evidence="1">
    <location>
        <position position="218"/>
    </location>
    <ligand>
        <name>substrate</name>
    </ligand>
</feature>
<feature type="binding site" evidence="1">
    <location>
        <position position="225"/>
    </location>
    <ligand>
        <name>substrate</name>
    </ligand>
</feature>
<feature type="binding site" evidence="1">
    <location>
        <position position="285"/>
    </location>
    <ligand>
        <name>substrate</name>
    </ligand>
</feature>
<feature type="site" description="Important for catalytic activity" evidence="1">
    <location>
        <position position="123"/>
    </location>
</feature>
<feature type="site" description="Important for catalytic activity" evidence="1">
    <location>
        <position position="125"/>
    </location>
</feature>
<feature type="site" description="Lowers pKa of active site Tyr" evidence="1">
    <location>
        <position position="156"/>
    </location>
</feature>
<feature type="modified residue" description="N-acetylalanine" evidence="4">
    <location>
        <position position="2"/>
    </location>
</feature>
<protein>
    <recommendedName>
        <fullName>Putative GDP-L-fucose synthase 2</fullName>
        <ecNumber evidence="2">1.1.1.271</ecNumber>
    </recommendedName>
    <alternativeName>
        <fullName>GDP-4-keto-6-deoxy-D-mannose-3,5-epimerase-4-reductase 2</fullName>
        <shortName>AtGER2</shortName>
    </alternativeName>
</protein>
<comment type="function">
    <text evidence="2">Catalyzes the two-step NADP-dependent conversion of GDP-4-dehydro-6-deoxy-D-mannose to GDP-fucose, involving an epimerase and a reductase reaction.</text>
</comment>
<comment type="catalytic activity">
    <reaction evidence="2">
        <text>GDP-beta-L-fucose + NADP(+) = GDP-4-dehydro-alpha-D-rhamnose + NADPH + H(+)</text>
        <dbReference type="Rhea" id="RHEA:18885"/>
        <dbReference type="ChEBI" id="CHEBI:15378"/>
        <dbReference type="ChEBI" id="CHEBI:57273"/>
        <dbReference type="ChEBI" id="CHEBI:57783"/>
        <dbReference type="ChEBI" id="CHEBI:57964"/>
        <dbReference type="ChEBI" id="CHEBI:58349"/>
        <dbReference type="EC" id="1.1.1.271"/>
    </reaction>
</comment>
<comment type="pathway">
    <text>Nucleotide-sugar biosynthesis; GDP-L-fucose biosynthesis via de novo pathway; GDP-L-fucose from GDP-alpha-D-mannose: step 2/2.</text>
</comment>
<comment type="subunit">
    <text evidence="1">Homodimer.</text>
</comment>
<comment type="alternative products">
    <event type="alternative splicing"/>
    <isoform>
        <id>Q9LMU0-1</id>
        <name>1</name>
        <sequence type="displayed"/>
    </isoform>
    <text>A number of isoforms are produced. According to EST sequences.</text>
</comment>
<comment type="similarity">
    <text evidence="3">Belongs to the NAD(P)-dependent epimerase/dehydratase family. Fucose synthase subfamily.</text>
</comment>
<proteinExistence type="evidence at protein level"/>
<reference key="1">
    <citation type="journal article" date="2000" name="Nature">
        <title>Sequence and analysis of chromosome 1 of the plant Arabidopsis thaliana.</title>
        <authorList>
            <person name="Theologis A."/>
            <person name="Ecker J.R."/>
            <person name="Palm C.J."/>
            <person name="Federspiel N.A."/>
            <person name="Kaul S."/>
            <person name="White O."/>
            <person name="Alonso J."/>
            <person name="Altafi H."/>
            <person name="Araujo R."/>
            <person name="Bowman C.L."/>
            <person name="Brooks S.Y."/>
            <person name="Buehler E."/>
            <person name="Chan A."/>
            <person name="Chao Q."/>
            <person name="Chen H."/>
            <person name="Cheuk R.F."/>
            <person name="Chin C.W."/>
            <person name="Chung M.K."/>
            <person name="Conn L."/>
            <person name="Conway A.B."/>
            <person name="Conway A.R."/>
            <person name="Creasy T.H."/>
            <person name="Dewar K."/>
            <person name="Dunn P."/>
            <person name="Etgu P."/>
            <person name="Feldblyum T.V."/>
            <person name="Feng J.-D."/>
            <person name="Fong B."/>
            <person name="Fujii C.Y."/>
            <person name="Gill J.E."/>
            <person name="Goldsmith A.D."/>
            <person name="Haas B."/>
            <person name="Hansen N.F."/>
            <person name="Hughes B."/>
            <person name="Huizar L."/>
            <person name="Hunter J.L."/>
            <person name="Jenkins J."/>
            <person name="Johnson-Hopson C."/>
            <person name="Khan S."/>
            <person name="Khaykin E."/>
            <person name="Kim C.J."/>
            <person name="Koo H.L."/>
            <person name="Kremenetskaia I."/>
            <person name="Kurtz D.B."/>
            <person name="Kwan A."/>
            <person name="Lam B."/>
            <person name="Langin-Hooper S."/>
            <person name="Lee A."/>
            <person name="Lee J.M."/>
            <person name="Lenz C.A."/>
            <person name="Li J.H."/>
            <person name="Li Y.-P."/>
            <person name="Lin X."/>
            <person name="Liu S.X."/>
            <person name="Liu Z.A."/>
            <person name="Luros J.S."/>
            <person name="Maiti R."/>
            <person name="Marziali A."/>
            <person name="Militscher J."/>
            <person name="Miranda M."/>
            <person name="Nguyen M."/>
            <person name="Nierman W.C."/>
            <person name="Osborne B.I."/>
            <person name="Pai G."/>
            <person name="Peterson J."/>
            <person name="Pham P.K."/>
            <person name="Rizzo M."/>
            <person name="Rooney T."/>
            <person name="Rowley D."/>
            <person name="Sakano H."/>
            <person name="Salzberg S.L."/>
            <person name="Schwartz J.R."/>
            <person name="Shinn P."/>
            <person name="Southwick A.M."/>
            <person name="Sun H."/>
            <person name="Tallon L.J."/>
            <person name="Tambunga G."/>
            <person name="Toriumi M.J."/>
            <person name="Town C.D."/>
            <person name="Utterback T."/>
            <person name="Van Aken S."/>
            <person name="Vaysberg M."/>
            <person name="Vysotskaia V.S."/>
            <person name="Walker M."/>
            <person name="Wu D."/>
            <person name="Yu G."/>
            <person name="Fraser C.M."/>
            <person name="Venter J.C."/>
            <person name="Davis R.W."/>
        </authorList>
    </citation>
    <scope>NUCLEOTIDE SEQUENCE [LARGE SCALE GENOMIC DNA]</scope>
    <source>
        <strain>cv. Columbia</strain>
    </source>
</reference>
<reference key="2">
    <citation type="journal article" date="2017" name="Plant J.">
        <title>Araport11: a complete reannotation of the Arabidopsis thaliana reference genome.</title>
        <authorList>
            <person name="Cheng C.Y."/>
            <person name="Krishnakumar V."/>
            <person name="Chan A.P."/>
            <person name="Thibaud-Nissen F."/>
            <person name="Schobel S."/>
            <person name="Town C.D."/>
        </authorList>
    </citation>
    <scope>GENOME REANNOTATION</scope>
    <source>
        <strain>cv. Columbia</strain>
    </source>
</reference>
<reference key="3">
    <citation type="journal article" date="2003" name="Science">
        <title>Empirical analysis of transcriptional activity in the Arabidopsis genome.</title>
        <authorList>
            <person name="Yamada K."/>
            <person name="Lim J."/>
            <person name="Dale J.M."/>
            <person name="Chen H."/>
            <person name="Shinn P."/>
            <person name="Palm C.J."/>
            <person name="Southwick A.M."/>
            <person name="Wu H.C."/>
            <person name="Kim C.J."/>
            <person name="Nguyen M."/>
            <person name="Pham P.K."/>
            <person name="Cheuk R.F."/>
            <person name="Karlin-Newmann G."/>
            <person name="Liu S.X."/>
            <person name="Lam B."/>
            <person name="Sakano H."/>
            <person name="Wu T."/>
            <person name="Yu G."/>
            <person name="Miranda M."/>
            <person name="Quach H.L."/>
            <person name="Tripp M."/>
            <person name="Chang C.H."/>
            <person name="Lee J.M."/>
            <person name="Toriumi M.J."/>
            <person name="Chan M.M."/>
            <person name="Tang C.C."/>
            <person name="Onodera C.S."/>
            <person name="Deng J.M."/>
            <person name="Akiyama K."/>
            <person name="Ansari Y."/>
            <person name="Arakawa T."/>
            <person name="Banh J."/>
            <person name="Banno F."/>
            <person name="Bowser L."/>
            <person name="Brooks S.Y."/>
            <person name="Carninci P."/>
            <person name="Chao Q."/>
            <person name="Choy N."/>
            <person name="Enju A."/>
            <person name="Goldsmith A.D."/>
            <person name="Gurjal M."/>
            <person name="Hansen N.F."/>
            <person name="Hayashizaki Y."/>
            <person name="Johnson-Hopson C."/>
            <person name="Hsuan V.W."/>
            <person name="Iida K."/>
            <person name="Karnes M."/>
            <person name="Khan S."/>
            <person name="Koesema E."/>
            <person name="Ishida J."/>
            <person name="Jiang P.X."/>
            <person name="Jones T."/>
            <person name="Kawai J."/>
            <person name="Kamiya A."/>
            <person name="Meyers C."/>
            <person name="Nakajima M."/>
            <person name="Narusaka M."/>
            <person name="Seki M."/>
            <person name="Sakurai T."/>
            <person name="Satou M."/>
            <person name="Tamse R."/>
            <person name="Vaysberg M."/>
            <person name="Wallender E.K."/>
            <person name="Wong C."/>
            <person name="Yamamura Y."/>
            <person name="Yuan S."/>
            <person name="Shinozaki K."/>
            <person name="Davis R.W."/>
            <person name="Theologis A."/>
            <person name="Ecker J.R."/>
        </authorList>
    </citation>
    <scope>NUCLEOTIDE SEQUENCE [LARGE SCALE MRNA]</scope>
    <source>
        <strain>cv. Columbia</strain>
    </source>
</reference>
<reference key="4">
    <citation type="journal article" date="2006" name="FEBS J.">
        <title>Reconstitution in vitro of the GDP-fucose biosynthetic pathways of Caenorhabditis elegans and Drosophila melanogaster.</title>
        <authorList>
            <person name="Rhomberg S."/>
            <person name="Fuchsluger C."/>
            <person name="Rendic D."/>
            <person name="Paschinger K."/>
            <person name="Jantsch V."/>
            <person name="Kosma P."/>
            <person name="Wilson I.B.H."/>
        </authorList>
    </citation>
    <scope>FUNCTION</scope>
    <scope>CATALYTIC ACTIVITY</scope>
</reference>
<reference key="5">
    <citation type="journal article" date="2012" name="Mol. Cell. Proteomics">
        <title>Comparative large-scale characterisation of plant vs. mammal proteins reveals similar and idiosyncratic N-alpha acetylation features.</title>
        <authorList>
            <person name="Bienvenut W.V."/>
            <person name="Sumpton D."/>
            <person name="Martinez A."/>
            <person name="Lilla S."/>
            <person name="Espagne C."/>
            <person name="Meinnel T."/>
            <person name="Giglione C."/>
        </authorList>
    </citation>
    <scope>ACETYLATION [LARGE SCALE ANALYSIS] AT ALA-2</scope>
    <scope>CLEAVAGE OF INITIATOR METHIONINE [LARGE SCALE ANALYSIS]</scope>
    <scope>IDENTIFICATION BY MASS SPECTROMETRY [LARGE SCALE ANALYSIS]</scope>
</reference>
<accession>Q9LMU0</accession>
<accession>Q3EDA2</accession>
<accession>Q3EDA3</accession>